<keyword id="KW-0472">Membrane</keyword>
<keyword id="KW-0520">NAD</keyword>
<keyword id="KW-0521">NADP</keyword>
<keyword id="KW-0618">Plastoquinone</keyword>
<keyword id="KW-0874">Quinone</keyword>
<keyword id="KW-1185">Reference proteome</keyword>
<keyword id="KW-0793">Thylakoid</keyword>
<keyword id="KW-1278">Translocase</keyword>
<keyword id="KW-0813">Transport</keyword>
<gene>
    <name evidence="1" type="primary">ndhN</name>
    <name type="ordered locus">PMT_1731</name>
</gene>
<accession>Q7V543</accession>
<protein>
    <recommendedName>
        <fullName evidence="1">NAD(P)H-quinone oxidoreductase subunit N</fullName>
        <ecNumber evidence="1">7.1.1.-</ecNumber>
    </recommendedName>
    <alternativeName>
        <fullName evidence="1">NAD(P)H dehydrogenase I subunit N</fullName>
        <shortName evidence="1">NDH-1 subunit N</shortName>
        <shortName evidence="1">NDH-N</shortName>
    </alternativeName>
</protein>
<name>NDHN_PROMM</name>
<feature type="chain" id="PRO_0000352226" description="NAD(P)H-quinone oxidoreductase subunit N">
    <location>
        <begin position="1"/>
        <end position="153"/>
    </location>
</feature>
<reference key="1">
    <citation type="journal article" date="2003" name="Nature">
        <title>Genome divergence in two Prochlorococcus ecotypes reflects oceanic niche differentiation.</title>
        <authorList>
            <person name="Rocap G."/>
            <person name="Larimer F.W."/>
            <person name="Lamerdin J.E."/>
            <person name="Malfatti S."/>
            <person name="Chain P."/>
            <person name="Ahlgren N.A."/>
            <person name="Arellano A."/>
            <person name="Coleman M."/>
            <person name="Hauser L."/>
            <person name="Hess W.R."/>
            <person name="Johnson Z.I."/>
            <person name="Land M.L."/>
            <person name="Lindell D."/>
            <person name="Post A.F."/>
            <person name="Regala W."/>
            <person name="Shah M."/>
            <person name="Shaw S.L."/>
            <person name="Steglich C."/>
            <person name="Sullivan M.B."/>
            <person name="Ting C.S."/>
            <person name="Tolonen A."/>
            <person name="Webb E.A."/>
            <person name="Zinser E.R."/>
            <person name="Chisholm S.W."/>
        </authorList>
    </citation>
    <scope>NUCLEOTIDE SEQUENCE [LARGE SCALE GENOMIC DNA]</scope>
    <source>
        <strain>MIT 9313</strain>
    </source>
</reference>
<proteinExistence type="inferred from homology"/>
<dbReference type="EC" id="7.1.1.-" evidence="1"/>
<dbReference type="EMBL" id="BX548175">
    <property type="protein sequence ID" value="CAE21906.1"/>
    <property type="molecule type" value="Genomic_DNA"/>
</dbReference>
<dbReference type="RefSeq" id="WP_011131098.1">
    <property type="nucleotide sequence ID" value="NC_005071.1"/>
</dbReference>
<dbReference type="SMR" id="Q7V543"/>
<dbReference type="KEGG" id="pmt:PMT_1731"/>
<dbReference type="eggNOG" id="ENOG5033TWM">
    <property type="taxonomic scope" value="Bacteria"/>
</dbReference>
<dbReference type="HOGENOM" id="CLU_087432_0_0_3"/>
<dbReference type="OrthoDB" id="510798at2"/>
<dbReference type="Proteomes" id="UP000001423">
    <property type="component" value="Chromosome"/>
</dbReference>
<dbReference type="GO" id="GO:0031676">
    <property type="term" value="C:plasma membrane-derived thylakoid membrane"/>
    <property type="evidence" value="ECO:0007669"/>
    <property type="project" value="UniProtKB-SubCell"/>
</dbReference>
<dbReference type="GO" id="GO:0016655">
    <property type="term" value="F:oxidoreductase activity, acting on NAD(P)H, quinone or similar compound as acceptor"/>
    <property type="evidence" value="ECO:0007669"/>
    <property type="project" value="UniProtKB-UniRule"/>
</dbReference>
<dbReference type="GO" id="GO:0048038">
    <property type="term" value="F:quinone binding"/>
    <property type="evidence" value="ECO:0007669"/>
    <property type="project" value="UniProtKB-KW"/>
</dbReference>
<dbReference type="HAMAP" id="MF_01353">
    <property type="entry name" value="NDH1_NDH1N"/>
    <property type="match status" value="1"/>
</dbReference>
<dbReference type="InterPro" id="IPR020874">
    <property type="entry name" value="NAD(P)H-quinone_OxRdtase_su_N"/>
</dbReference>
<dbReference type="PANTHER" id="PTHR35515">
    <property type="entry name" value="NAD(P)H-QUINONE OXIDOREDUCTASE SUBUNIT N, CHLOROPLASTIC"/>
    <property type="match status" value="1"/>
</dbReference>
<dbReference type="PANTHER" id="PTHR35515:SF1">
    <property type="entry name" value="NAD(P)H-QUINONE OXIDOREDUCTASE SUBUNIT N, CHLOROPLASTIC"/>
    <property type="match status" value="1"/>
</dbReference>
<dbReference type="Pfam" id="PF11909">
    <property type="entry name" value="NdhN"/>
    <property type="match status" value="1"/>
</dbReference>
<comment type="function">
    <text evidence="1">NDH-1 shuttles electrons from an unknown electron donor, via FMN and iron-sulfur (Fe-S) centers, to quinones in the respiratory and/or the photosynthetic chain. The immediate electron acceptor for the enzyme in this species is believed to be plastoquinone. Couples the redox reaction to proton translocation, and thus conserves the redox energy in a proton gradient. Cyanobacterial NDH-1 also plays a role in inorganic carbon-concentration.</text>
</comment>
<comment type="catalytic activity">
    <reaction evidence="1">
        <text>a plastoquinone + NADH + (n+1) H(+)(in) = a plastoquinol + NAD(+) + n H(+)(out)</text>
        <dbReference type="Rhea" id="RHEA:42608"/>
        <dbReference type="Rhea" id="RHEA-COMP:9561"/>
        <dbReference type="Rhea" id="RHEA-COMP:9562"/>
        <dbReference type="ChEBI" id="CHEBI:15378"/>
        <dbReference type="ChEBI" id="CHEBI:17757"/>
        <dbReference type="ChEBI" id="CHEBI:57540"/>
        <dbReference type="ChEBI" id="CHEBI:57945"/>
        <dbReference type="ChEBI" id="CHEBI:62192"/>
    </reaction>
</comment>
<comment type="catalytic activity">
    <reaction evidence="1">
        <text>a plastoquinone + NADPH + (n+1) H(+)(in) = a plastoquinol + NADP(+) + n H(+)(out)</text>
        <dbReference type="Rhea" id="RHEA:42612"/>
        <dbReference type="Rhea" id="RHEA-COMP:9561"/>
        <dbReference type="Rhea" id="RHEA-COMP:9562"/>
        <dbReference type="ChEBI" id="CHEBI:15378"/>
        <dbReference type="ChEBI" id="CHEBI:17757"/>
        <dbReference type="ChEBI" id="CHEBI:57783"/>
        <dbReference type="ChEBI" id="CHEBI:58349"/>
        <dbReference type="ChEBI" id="CHEBI:62192"/>
    </reaction>
</comment>
<comment type="subunit">
    <text evidence="1">NDH-1 can be composed of about 15 different subunits; different subcomplexes with different compositions have been identified which probably have different functions.</text>
</comment>
<comment type="subcellular location">
    <subcellularLocation>
        <location evidence="1">Cellular thylakoid membrane</location>
        <topology evidence="1">Peripheral membrane protein</topology>
        <orientation evidence="1">Cytoplasmic side</orientation>
    </subcellularLocation>
</comment>
<comment type="similarity">
    <text evidence="1">Belongs to the complex I NdhN subunit family.</text>
</comment>
<evidence type="ECO:0000255" key="1">
    <source>
        <dbReference type="HAMAP-Rule" id="MF_01353"/>
    </source>
</evidence>
<organism>
    <name type="scientific">Prochlorococcus marinus (strain MIT 9313)</name>
    <dbReference type="NCBI Taxonomy" id="74547"/>
    <lineage>
        <taxon>Bacteria</taxon>
        <taxon>Bacillati</taxon>
        <taxon>Cyanobacteriota</taxon>
        <taxon>Cyanophyceae</taxon>
        <taxon>Synechococcales</taxon>
        <taxon>Prochlorococcaceae</taxon>
        <taxon>Prochlorococcus</taxon>
    </lineage>
</organism>
<sequence>MPLLLSGRVFRRDLDACGCLAMHVPLEGGSETRLLRRLRAAGYRTQLSSARGLGDPEVFLFELHGIRPPHLGHQSVGRNGAVGEVQQVMPQLAELFVDNAPVVLWLLEGQVLSRSELLALCDLCKRESRLRVVVEMGGARSLNWQPMSTLLGD</sequence>